<comment type="function">
    <text evidence="1">Monomeric heme protein which primary function is to store oxygen and facilitate its diffusion within muscle tissues. Reversibly binds oxygen through a pentacoordinated heme iron and enables its timely and efficient release as needed during periods of heightened demand. Depending on the oxidative conditions of tissues and cells, and in addition to its ability to bind oxygen, it also has a nitrite reductase activity whereby it regulates the production of bioactive nitric oxide. Under stress conditions, like hypoxia and anoxia, it also protects cells against reactive oxygen species thanks to its pseudoperoxidase activity.</text>
</comment>
<comment type="catalytic activity">
    <reaction evidence="1">
        <text>Fe(III)-heme b-[protein] + nitric oxide + H2O = Fe(II)-heme b-[protein] + nitrite + 2 H(+)</text>
        <dbReference type="Rhea" id="RHEA:77711"/>
        <dbReference type="Rhea" id="RHEA-COMP:18975"/>
        <dbReference type="Rhea" id="RHEA-COMP:18976"/>
        <dbReference type="ChEBI" id="CHEBI:15377"/>
        <dbReference type="ChEBI" id="CHEBI:15378"/>
        <dbReference type="ChEBI" id="CHEBI:16301"/>
        <dbReference type="ChEBI" id="CHEBI:16480"/>
        <dbReference type="ChEBI" id="CHEBI:55376"/>
        <dbReference type="ChEBI" id="CHEBI:60344"/>
    </reaction>
    <physiologicalReaction direction="right-to-left" evidence="1">
        <dbReference type="Rhea" id="RHEA:77713"/>
    </physiologicalReaction>
</comment>
<comment type="catalytic activity">
    <reaction evidence="1">
        <text>H2O2 + AH2 = A + 2 H2O</text>
        <dbReference type="Rhea" id="RHEA:30275"/>
        <dbReference type="ChEBI" id="CHEBI:13193"/>
        <dbReference type="ChEBI" id="CHEBI:15377"/>
        <dbReference type="ChEBI" id="CHEBI:16240"/>
        <dbReference type="ChEBI" id="CHEBI:17499"/>
    </reaction>
</comment>
<comment type="subunit">
    <text evidence="7">Monomer.</text>
</comment>
<comment type="subcellular location">
    <subcellularLocation>
        <location evidence="1">Cytoplasm</location>
        <location evidence="1">Sarcoplasm</location>
    </subcellularLocation>
</comment>
<comment type="mass spectrometry"/>
<comment type="similarity">
    <text evidence="6">Belongs to the globin family.</text>
</comment>
<gene>
    <name evidence="1" type="primary">MB</name>
</gene>
<keyword id="KW-0963">Cytoplasm</keyword>
<keyword id="KW-0903">Direct protein sequencing</keyword>
<keyword id="KW-0349">Heme</keyword>
<keyword id="KW-0408">Iron</keyword>
<keyword id="KW-0479">Metal-binding</keyword>
<keyword id="KW-0514">Muscle protein</keyword>
<keyword id="KW-0560">Oxidoreductase</keyword>
<keyword id="KW-0561">Oxygen transport</keyword>
<keyword id="KW-0597">Phosphoprotein</keyword>
<keyword id="KW-0813">Transport</keyword>
<proteinExistence type="evidence at protein level"/>
<reference key="1">
    <citation type="journal article" date="2015" name="RSC Adv.">
        <title>Insight into the structural and functional features of myoglobin from Hystrix cristata L. and Rangifer tarandus L.</title>
        <authorList>
            <person name="Di Guiseppe A.M.A."/>
            <person name="Caso J.V."/>
            <person name="Severino V."/>
            <person name="Ragucci S."/>
            <person name="Chambery A."/>
            <person name="Russo R."/>
            <person name="Fattorusso R."/>
            <person name="Ferreras J.M."/>
            <person name="Russo L."/>
            <person name="Di Maro A."/>
        </authorList>
    </citation>
    <scope>PROTEIN SEQUENCE OF 2-154</scope>
    <scope>SUBUNIT</scope>
    <scope>STRUCTURE BY NMR OF 2-154</scope>
    <scope>MASS SPECTROMETRY</scope>
    <scope>IDENTIFICATION BY MASS SPECTROMETRY</scope>
    <source>
        <tissue evidence="8">Muscle</tissue>
    </source>
</reference>
<name>MYG_HYSCR</name>
<accession>C0HJQ9</accession>
<sequence>MGLSDGEWQLVLNVWGKVEGDIGGHGQEVLIRLFKGHPETLEKFDKFKHLKAEDEMRASEDLKKHGTTVLTALGGILKKKGQHAAELAPLAQSHATKHKIPVKYLEFISEAIIQVLQSKHPADFGADTQGAMSKALELFRNDIAAKYKELGFQG</sequence>
<protein>
    <recommendedName>
        <fullName evidence="8">Myoglobin</fullName>
    </recommendedName>
    <alternativeName>
        <fullName evidence="1">Nitrite reductase MB</fullName>
        <ecNumber evidence="1">1.7.-.-</ecNumber>
    </alternativeName>
    <alternativeName>
        <fullName evidence="1">Pseudoperoxidase MB</fullName>
        <ecNumber evidence="1">1.11.1.-</ecNumber>
    </alternativeName>
</protein>
<feature type="initiator methionine" description="Removed" evidence="9">
    <location>
        <position position="1"/>
    </location>
</feature>
<feature type="chain" id="PRO_0000438692" description="Myoglobin" evidence="7">
    <location>
        <begin position="2"/>
        <end position="154"/>
    </location>
</feature>
<feature type="domain" description="Globin" evidence="6">
    <location>
        <begin position="2"/>
        <end position="148"/>
    </location>
</feature>
<feature type="binding site" evidence="4">
    <location>
        <position position="65"/>
    </location>
    <ligand>
        <name>nitrite</name>
        <dbReference type="ChEBI" id="CHEBI:16301"/>
    </ligand>
</feature>
<feature type="binding site" evidence="2 6">
    <location>
        <position position="65"/>
    </location>
    <ligand>
        <name>O2</name>
        <dbReference type="ChEBI" id="CHEBI:15379"/>
    </ligand>
</feature>
<feature type="binding site" description="proximal binding residue" evidence="1">
    <location>
        <position position="94"/>
    </location>
    <ligand>
        <name>heme b</name>
        <dbReference type="ChEBI" id="CHEBI:60344"/>
    </ligand>
    <ligandPart>
        <name>Fe</name>
        <dbReference type="ChEBI" id="CHEBI:18248"/>
    </ligandPart>
</feature>
<feature type="modified residue" description="Phosphoserine" evidence="5">
    <location>
        <position position="4"/>
    </location>
</feature>
<feature type="modified residue" description="Phosphothreonine" evidence="3">
    <location>
        <position position="68"/>
    </location>
</feature>
<evidence type="ECO:0000250" key="1">
    <source>
        <dbReference type="UniProtKB" id="P02144"/>
    </source>
</evidence>
<evidence type="ECO:0000250" key="2">
    <source>
        <dbReference type="UniProtKB" id="P02189"/>
    </source>
</evidence>
<evidence type="ECO:0000250" key="3">
    <source>
        <dbReference type="UniProtKB" id="P04247"/>
    </source>
</evidence>
<evidence type="ECO:0000250" key="4">
    <source>
        <dbReference type="UniProtKB" id="P68082"/>
    </source>
</evidence>
<evidence type="ECO:0000250" key="5">
    <source>
        <dbReference type="UniProtKB" id="Q9QZ76"/>
    </source>
</evidence>
<evidence type="ECO:0000255" key="6">
    <source>
        <dbReference type="PROSITE-ProRule" id="PRU00238"/>
    </source>
</evidence>
<evidence type="ECO:0000269" key="7">
    <source ref="1"/>
</evidence>
<evidence type="ECO:0000303" key="8">
    <source ref="1"/>
</evidence>
<evidence type="ECO:0000305" key="9">
    <source ref="1"/>
</evidence>
<dbReference type="EC" id="1.7.-.-" evidence="1"/>
<dbReference type="EC" id="1.11.1.-" evidence="1"/>
<dbReference type="SMR" id="C0HJQ9"/>
<dbReference type="GO" id="GO:0070062">
    <property type="term" value="C:extracellular exosome"/>
    <property type="evidence" value="ECO:0007669"/>
    <property type="project" value="TreeGrafter"/>
</dbReference>
<dbReference type="GO" id="GO:0016528">
    <property type="term" value="C:sarcoplasm"/>
    <property type="evidence" value="ECO:0000250"/>
    <property type="project" value="UniProtKB"/>
</dbReference>
<dbReference type="GO" id="GO:0020037">
    <property type="term" value="F:heme binding"/>
    <property type="evidence" value="ECO:0007669"/>
    <property type="project" value="InterPro"/>
</dbReference>
<dbReference type="GO" id="GO:0046872">
    <property type="term" value="F:metal ion binding"/>
    <property type="evidence" value="ECO:0007669"/>
    <property type="project" value="UniProtKB-KW"/>
</dbReference>
<dbReference type="GO" id="GO:0098809">
    <property type="term" value="F:nitrite reductase activity"/>
    <property type="evidence" value="ECO:0000250"/>
    <property type="project" value="UniProtKB"/>
</dbReference>
<dbReference type="GO" id="GO:0019825">
    <property type="term" value="F:oxygen binding"/>
    <property type="evidence" value="ECO:0007669"/>
    <property type="project" value="InterPro"/>
</dbReference>
<dbReference type="GO" id="GO:0005344">
    <property type="term" value="F:oxygen carrier activity"/>
    <property type="evidence" value="ECO:0000250"/>
    <property type="project" value="UniProtKB"/>
</dbReference>
<dbReference type="GO" id="GO:0004601">
    <property type="term" value="F:peroxidase activity"/>
    <property type="evidence" value="ECO:0000250"/>
    <property type="project" value="UniProtKB"/>
</dbReference>
<dbReference type="GO" id="GO:0019430">
    <property type="term" value="P:removal of superoxide radicals"/>
    <property type="evidence" value="ECO:0000250"/>
    <property type="project" value="UniProtKB"/>
</dbReference>
<dbReference type="CDD" id="cd08926">
    <property type="entry name" value="Mb"/>
    <property type="match status" value="1"/>
</dbReference>
<dbReference type="Gene3D" id="6.10.140.2100">
    <property type="match status" value="1"/>
</dbReference>
<dbReference type="Gene3D" id="6.10.140.2110">
    <property type="match status" value="1"/>
</dbReference>
<dbReference type="InterPro" id="IPR000971">
    <property type="entry name" value="Globin"/>
</dbReference>
<dbReference type="InterPro" id="IPR009050">
    <property type="entry name" value="Globin-like_sf"/>
</dbReference>
<dbReference type="InterPro" id="IPR002335">
    <property type="entry name" value="Myoglobin"/>
</dbReference>
<dbReference type="PANTHER" id="PTHR47132">
    <property type="entry name" value="MYOGLOBIN"/>
    <property type="match status" value="1"/>
</dbReference>
<dbReference type="PANTHER" id="PTHR47132:SF1">
    <property type="entry name" value="MYOGLOBIN"/>
    <property type="match status" value="1"/>
</dbReference>
<dbReference type="Pfam" id="PF00042">
    <property type="entry name" value="Globin"/>
    <property type="match status" value="1"/>
</dbReference>
<dbReference type="PRINTS" id="PR00613">
    <property type="entry name" value="MYOGLOBIN"/>
</dbReference>
<dbReference type="SUPFAM" id="SSF46458">
    <property type="entry name" value="Globin-like"/>
    <property type="match status" value="1"/>
</dbReference>
<dbReference type="PROSITE" id="PS01033">
    <property type="entry name" value="GLOBIN"/>
    <property type="match status" value="1"/>
</dbReference>
<organism>
    <name type="scientific">Hystrix cristata</name>
    <name type="common">North African crested porcupine</name>
    <dbReference type="NCBI Taxonomy" id="10137"/>
    <lineage>
        <taxon>Eukaryota</taxon>
        <taxon>Metazoa</taxon>
        <taxon>Chordata</taxon>
        <taxon>Craniata</taxon>
        <taxon>Vertebrata</taxon>
        <taxon>Euteleostomi</taxon>
        <taxon>Mammalia</taxon>
        <taxon>Eutheria</taxon>
        <taxon>Euarchontoglires</taxon>
        <taxon>Glires</taxon>
        <taxon>Rodentia</taxon>
        <taxon>Hystricomorpha</taxon>
        <taxon>Hystricidae</taxon>
        <taxon>Hystrix</taxon>
    </lineage>
</organism>